<protein>
    <recommendedName>
        <fullName>Mitochondrial import inner membrane translocase subunit TIM13</fullName>
    </recommendedName>
</protein>
<reference key="1">
    <citation type="journal article" date="2004" name="Proc. Natl. Acad. Sci. U.S.A.">
        <title>The diploid genome sequence of Candida albicans.</title>
        <authorList>
            <person name="Jones T."/>
            <person name="Federspiel N.A."/>
            <person name="Chibana H."/>
            <person name="Dungan J."/>
            <person name="Kalman S."/>
            <person name="Magee B.B."/>
            <person name="Newport G."/>
            <person name="Thorstenson Y.R."/>
            <person name="Agabian N."/>
            <person name="Magee P.T."/>
            <person name="Davis R.W."/>
            <person name="Scherer S."/>
        </authorList>
    </citation>
    <scope>NUCLEOTIDE SEQUENCE [LARGE SCALE GENOMIC DNA]</scope>
    <source>
        <strain>SC5314 / ATCC MYA-2876</strain>
    </source>
</reference>
<reference key="2">
    <citation type="journal article" date="2007" name="Genome Biol.">
        <title>Assembly of the Candida albicans genome into sixteen supercontigs aligned on the eight chromosomes.</title>
        <authorList>
            <person name="van het Hoog M."/>
            <person name="Rast T.J."/>
            <person name="Martchenko M."/>
            <person name="Grindle S."/>
            <person name="Dignard D."/>
            <person name="Hogues H."/>
            <person name="Cuomo C."/>
            <person name="Berriman M."/>
            <person name="Scherer S."/>
            <person name="Magee B.B."/>
            <person name="Whiteway M."/>
            <person name="Chibana H."/>
            <person name="Nantel A."/>
            <person name="Magee P.T."/>
        </authorList>
    </citation>
    <scope>GENOME REANNOTATION</scope>
    <source>
        <strain>SC5314 / ATCC MYA-2876</strain>
    </source>
</reference>
<reference key="3">
    <citation type="journal article" date="2013" name="Genome Biol.">
        <title>Assembly of a phased diploid Candida albicans genome facilitates allele-specific measurements and provides a simple model for repeat and indel structure.</title>
        <authorList>
            <person name="Muzzey D."/>
            <person name="Schwartz K."/>
            <person name="Weissman J.S."/>
            <person name="Sherlock G."/>
        </authorList>
    </citation>
    <scope>NUCLEOTIDE SEQUENCE [LARGE SCALE GENOMIC DNA]</scope>
    <scope>GENOME REANNOTATION</scope>
    <source>
        <strain>SC5314 / ATCC MYA-2876</strain>
    </source>
</reference>
<accession>Q5AF54</accession>
<accession>A0A1D8PLK3</accession>
<dbReference type="EMBL" id="CP017626">
    <property type="protein sequence ID" value="AOW29017.1"/>
    <property type="molecule type" value="Genomic_DNA"/>
</dbReference>
<dbReference type="RefSeq" id="XP_720504.2">
    <property type="nucleotide sequence ID" value="XM_715411.2"/>
</dbReference>
<dbReference type="SMR" id="Q5AF54"/>
<dbReference type="FunCoup" id="Q5AF54">
    <property type="interactions" value="462"/>
</dbReference>
<dbReference type="STRING" id="237561.Q5AF54"/>
<dbReference type="PeptideAtlas" id="Q5AF54"/>
<dbReference type="EnsemblFungi" id="C4_02480C_A-T">
    <property type="protein sequence ID" value="C4_02480C_A-T-p1"/>
    <property type="gene ID" value="C4_02480C_A"/>
</dbReference>
<dbReference type="GeneID" id="3637868"/>
<dbReference type="KEGG" id="cal:CAALFM_C402480CA"/>
<dbReference type="CGD" id="CAL0000199188">
    <property type="gene designation" value="TIM13"/>
</dbReference>
<dbReference type="VEuPathDB" id="FungiDB:C4_02480C_A"/>
<dbReference type="eggNOG" id="KOG1733">
    <property type="taxonomic scope" value="Eukaryota"/>
</dbReference>
<dbReference type="HOGENOM" id="CLU_141397_0_1_1"/>
<dbReference type="InParanoid" id="Q5AF54"/>
<dbReference type="OrthoDB" id="7813104at2759"/>
<dbReference type="PRO" id="PR:Q5AF54"/>
<dbReference type="Proteomes" id="UP000000559">
    <property type="component" value="Chromosome 4"/>
</dbReference>
<dbReference type="GO" id="GO:0005743">
    <property type="term" value="C:mitochondrial inner membrane"/>
    <property type="evidence" value="ECO:0007669"/>
    <property type="project" value="UniProtKB-SubCell"/>
</dbReference>
<dbReference type="GO" id="GO:0042719">
    <property type="term" value="C:mitochondrial intermembrane space protein transporter complex"/>
    <property type="evidence" value="ECO:0000318"/>
    <property type="project" value="GO_Central"/>
</dbReference>
<dbReference type="GO" id="GO:0046872">
    <property type="term" value="F:metal ion binding"/>
    <property type="evidence" value="ECO:0007669"/>
    <property type="project" value="UniProtKB-KW"/>
</dbReference>
<dbReference type="GO" id="GO:0140318">
    <property type="term" value="F:protein transporter activity"/>
    <property type="evidence" value="ECO:0007669"/>
    <property type="project" value="EnsemblFungi"/>
</dbReference>
<dbReference type="GO" id="GO:0045039">
    <property type="term" value="P:protein insertion into mitochondrial inner membrane"/>
    <property type="evidence" value="ECO:0000318"/>
    <property type="project" value="GO_Central"/>
</dbReference>
<dbReference type="FunFam" id="1.10.287.810:FF:000001">
    <property type="entry name" value="mitochondrial import inner membrane translocase subunit TIM13"/>
    <property type="match status" value="1"/>
</dbReference>
<dbReference type="Gene3D" id="1.10.287.810">
    <property type="entry name" value="Mitochondrial import inner membrane translocase subunit tim13 like domains"/>
    <property type="match status" value="1"/>
</dbReference>
<dbReference type="InterPro" id="IPR004217">
    <property type="entry name" value="Tim10-like"/>
</dbReference>
<dbReference type="InterPro" id="IPR035427">
    <property type="entry name" value="Tim10-like_dom_sf"/>
</dbReference>
<dbReference type="Pfam" id="PF02953">
    <property type="entry name" value="zf-Tim10_DDP"/>
    <property type="match status" value="1"/>
</dbReference>
<dbReference type="SUPFAM" id="SSF144122">
    <property type="entry name" value="Tim10-like"/>
    <property type="match status" value="1"/>
</dbReference>
<keyword id="KW-0143">Chaperone</keyword>
<keyword id="KW-1015">Disulfide bond</keyword>
<keyword id="KW-0472">Membrane</keyword>
<keyword id="KW-0479">Metal-binding</keyword>
<keyword id="KW-0496">Mitochondrion</keyword>
<keyword id="KW-0999">Mitochondrion inner membrane</keyword>
<keyword id="KW-0653">Protein transport</keyword>
<keyword id="KW-1185">Reference proteome</keyword>
<keyword id="KW-0811">Translocation</keyword>
<keyword id="KW-0813">Transport</keyword>
<keyword id="KW-0862">Zinc</keyword>
<organism>
    <name type="scientific">Candida albicans (strain SC5314 / ATCC MYA-2876)</name>
    <name type="common">Yeast</name>
    <dbReference type="NCBI Taxonomy" id="237561"/>
    <lineage>
        <taxon>Eukaryota</taxon>
        <taxon>Fungi</taxon>
        <taxon>Dikarya</taxon>
        <taxon>Ascomycota</taxon>
        <taxon>Saccharomycotina</taxon>
        <taxon>Pichiomycetes</taxon>
        <taxon>Debaryomycetaceae</taxon>
        <taxon>Candida/Lodderomyces clade</taxon>
        <taxon>Candida</taxon>
    </lineage>
</organism>
<sequence length="108" mass="12086">MAFWNSSSSSSSSGQTDSSSTSSPASLRSQQIKQDLQNQISQELAAANATELVRTITENCFDKCILIPKDTLSPTELQCISQCREKYMRSWNVISKAYIGRIQQEQHH</sequence>
<name>TIM13_CANAL</name>
<proteinExistence type="inferred from homology"/>
<evidence type="ECO:0000250" key="1"/>
<evidence type="ECO:0000256" key="2">
    <source>
        <dbReference type="SAM" id="MobiDB-lite"/>
    </source>
</evidence>
<evidence type="ECO:0000305" key="3"/>
<gene>
    <name type="primary">TIM13</name>
    <name type="ordered locus">CAALFM_C402480CA</name>
    <name type="ORF">CaO19.10268</name>
    <name type="ORF">CaO19.2754</name>
</gene>
<feature type="chain" id="PRO_0000228071" description="Mitochondrial import inner membrane translocase subunit TIM13">
    <location>
        <begin position="1"/>
        <end position="108"/>
    </location>
</feature>
<feature type="region of interest" description="Disordered" evidence="2">
    <location>
        <begin position="1"/>
        <end position="34"/>
    </location>
</feature>
<feature type="short sequence motif" description="Twin CX3C motif">
    <location>
        <begin position="60"/>
        <end position="83"/>
    </location>
</feature>
<feature type="compositionally biased region" description="Low complexity" evidence="2">
    <location>
        <begin position="1"/>
        <end position="29"/>
    </location>
</feature>
<feature type="disulfide bond" evidence="1">
    <location>
        <begin position="60"/>
        <end position="83"/>
    </location>
</feature>
<feature type="disulfide bond" evidence="1">
    <location>
        <begin position="64"/>
        <end position="79"/>
    </location>
</feature>
<comment type="function">
    <text evidence="1">Mitochondrial intermembrane chaperone that participates in the import and insertion of some multi-pass transmembrane proteins into the mitochondrial inner membrane. Also required for the transfer of beta-barrel precursors from the TOM complex to the sorting and assembly machinery (SAM complex) of the outer membrane. Acts as a chaperone-like protein that protects the hydrophobic precursors from aggregation and guide them through the mitochondrial intermembrane space. The TIM8-TIM13 complex is non essential and only mediates the import of few proteins, while the predominant TIM9-TIM10 70 kDa complex is crucial and mediates the import of much more proteins (By similarity).</text>
</comment>
<comment type="subunit">
    <text evidence="1">Heterohexamer; composed of 3 copies of TIM8 and 3 copies of TIM13, named soluble 70 kDa complex. Associates with the TIM22 complex, whose core is composed of TIM22 and TIM54. Interacts with the transmembrane regions of multi-pass transmembrane proteins in transit (By similarity).</text>
</comment>
<comment type="subcellular location">
    <subcellularLocation>
        <location evidence="1">Mitochondrion inner membrane</location>
        <topology evidence="1">Peripheral membrane protein</topology>
        <orientation evidence="1">Intermembrane side</orientation>
    </subcellularLocation>
</comment>
<comment type="domain">
    <text evidence="1">The twin CX3C motif contains 4 conserved Cys residues that form 2 disulfide bonds in the mitochondrial intermembrane space. However, during the transit of TIM13 from cytoplasm into mitochondrion, the Cys residues probably coordinate zinc, thereby preventing folding and allowing its transfer across mitochondrial outer membrane (By similarity).</text>
</comment>
<comment type="similarity">
    <text evidence="3">Belongs to the small Tim family.</text>
</comment>